<accession>Q58079</accession>
<sequence length="341" mass="38789">MINLDVWIDLTNAPHVHYFCQLIKKFEKEGIEYLLTFRDSGNLAKLVEIYNFVGKCIGKHGNTLKDKLIFYAERVIGLTELISNVKPKVAIAKHSVELPRVAFGLNIPVIFVVDNEHAEAQNKLTLPLADEIIKPIATDENKLKEFGGRNFISFEGTCEVANVNSRLKGYYPIDNEILKKLGICDDNPTIVMRPCPNSSYCNGHKDILPKIIEKLQKRIDCNIVVFPRDEHQKEIYREVNAIVPKETIDALSLLYNSDFMIGAGGTMNRESAILGIPTVSCYPQELLGVDKYLIEKDRMIHTNDIKEIINYVEDNLGKRMGVIELEDPTDLMFERVCNYLK</sequence>
<gene>
    <name type="ordered locus">MJ0665</name>
</gene>
<feature type="chain" id="PRO_0000106981" description="Uncharacterized protein MJ0665">
    <location>
        <begin position="1"/>
        <end position="341"/>
    </location>
</feature>
<organism>
    <name type="scientific">Methanocaldococcus jannaschii (strain ATCC 43067 / DSM 2661 / JAL-1 / JCM 10045 / NBRC 100440)</name>
    <name type="common">Methanococcus jannaschii</name>
    <dbReference type="NCBI Taxonomy" id="243232"/>
    <lineage>
        <taxon>Archaea</taxon>
        <taxon>Methanobacteriati</taxon>
        <taxon>Methanobacteriota</taxon>
        <taxon>Methanomada group</taxon>
        <taxon>Methanococci</taxon>
        <taxon>Methanococcales</taxon>
        <taxon>Methanocaldococcaceae</taxon>
        <taxon>Methanocaldococcus</taxon>
    </lineage>
</organism>
<name>Y665_METJA</name>
<proteinExistence type="predicted"/>
<protein>
    <recommendedName>
        <fullName>Uncharacterized protein MJ0665</fullName>
    </recommendedName>
</protein>
<reference key="1">
    <citation type="journal article" date="1996" name="Science">
        <title>Complete genome sequence of the methanogenic archaeon, Methanococcus jannaschii.</title>
        <authorList>
            <person name="Bult C.J."/>
            <person name="White O."/>
            <person name="Olsen G.J."/>
            <person name="Zhou L."/>
            <person name="Fleischmann R.D."/>
            <person name="Sutton G.G."/>
            <person name="Blake J.A."/>
            <person name="FitzGerald L.M."/>
            <person name="Clayton R.A."/>
            <person name="Gocayne J.D."/>
            <person name="Kerlavage A.R."/>
            <person name="Dougherty B.A."/>
            <person name="Tomb J.-F."/>
            <person name="Adams M.D."/>
            <person name="Reich C.I."/>
            <person name="Overbeek R."/>
            <person name="Kirkness E.F."/>
            <person name="Weinstock K.G."/>
            <person name="Merrick J.M."/>
            <person name="Glodek A."/>
            <person name="Scott J.L."/>
            <person name="Geoghagen N.S.M."/>
            <person name="Weidman J.F."/>
            <person name="Fuhrmann J.L."/>
            <person name="Nguyen D."/>
            <person name="Utterback T.R."/>
            <person name="Kelley J.M."/>
            <person name="Peterson J.D."/>
            <person name="Sadow P.W."/>
            <person name="Hanna M.C."/>
            <person name="Cotton M.D."/>
            <person name="Roberts K.M."/>
            <person name="Hurst M.A."/>
            <person name="Kaine B.P."/>
            <person name="Borodovsky M."/>
            <person name="Klenk H.-P."/>
            <person name="Fraser C.M."/>
            <person name="Smith H.O."/>
            <person name="Woese C.R."/>
            <person name="Venter J.C."/>
        </authorList>
    </citation>
    <scope>NUCLEOTIDE SEQUENCE [LARGE SCALE GENOMIC DNA]</scope>
    <source>
        <strain>ATCC 43067 / DSM 2661 / JAL-1 / JCM 10045 / NBRC 100440</strain>
    </source>
</reference>
<keyword id="KW-1185">Reference proteome</keyword>
<dbReference type="EMBL" id="L77117">
    <property type="protein sequence ID" value="AAB98656.1"/>
    <property type="molecule type" value="Genomic_DNA"/>
</dbReference>
<dbReference type="PIR" id="A64383">
    <property type="entry name" value="A64383"/>
</dbReference>
<dbReference type="SMR" id="Q58079"/>
<dbReference type="STRING" id="243232.MJ_0665"/>
<dbReference type="PaxDb" id="243232-MJ_0665"/>
<dbReference type="EnsemblBacteria" id="AAB98656">
    <property type="protein sequence ID" value="AAB98656"/>
    <property type="gene ID" value="MJ_0665"/>
</dbReference>
<dbReference type="KEGG" id="mja:MJ_0665"/>
<dbReference type="eggNOG" id="arCOG01395">
    <property type="taxonomic scope" value="Archaea"/>
</dbReference>
<dbReference type="HOGENOM" id="CLU_067068_1_0_2"/>
<dbReference type="InParanoid" id="Q58079"/>
<dbReference type="PhylomeDB" id="Q58079"/>
<dbReference type="Proteomes" id="UP000000805">
    <property type="component" value="Chromosome"/>
</dbReference>
<dbReference type="Gene3D" id="3.40.50.2000">
    <property type="entry name" value="Glycogen Phosphorylase B"/>
    <property type="match status" value="1"/>
</dbReference>
<dbReference type="InterPro" id="IPR007152">
    <property type="entry name" value="DUF354"/>
</dbReference>
<dbReference type="PANTHER" id="PTHR39662:SF1">
    <property type="entry name" value="DUF354 DOMAIN-CONTAINING PROTEIN"/>
    <property type="match status" value="1"/>
</dbReference>
<dbReference type="PANTHER" id="PTHR39662">
    <property type="entry name" value="DUF354 DOMAIN-CONTAINING PROTEIN-RELATED"/>
    <property type="match status" value="1"/>
</dbReference>
<dbReference type="Pfam" id="PF04007">
    <property type="entry name" value="DUF354"/>
    <property type="match status" value="1"/>
</dbReference>
<dbReference type="PIRSF" id="PIRSF005357">
    <property type="entry name" value="UCP005357"/>
    <property type="match status" value="1"/>
</dbReference>
<dbReference type="SUPFAM" id="SSF53756">
    <property type="entry name" value="UDP-Glycosyltransferase/glycogen phosphorylase"/>
    <property type="match status" value="1"/>
</dbReference>